<sequence length="76" mass="8743">MRRTVPRGTLRKIIKKHKPHLRLAANTDLLVHLSFLLFLHRLAEEARTNAFENKSKIIKPEHTIAAAKVILKKSRG</sequence>
<protein>
    <recommendedName>
        <fullName>Centromere protein W</fullName>
        <shortName>CENP-W</shortName>
    </recommendedName>
</protein>
<gene>
    <name type="primary">CENPW</name>
</gene>
<proteinExistence type="evidence at protein level"/>
<keyword id="KW-0002">3D-structure</keyword>
<keyword id="KW-0131">Cell cycle</keyword>
<keyword id="KW-0132">Cell division</keyword>
<keyword id="KW-0137">Centromere</keyword>
<keyword id="KW-0158">Chromosome</keyword>
<keyword id="KW-0238">DNA-binding</keyword>
<keyword id="KW-0995">Kinetochore</keyword>
<keyword id="KW-0498">Mitosis</keyword>
<keyword id="KW-0539">Nucleus</keyword>
<keyword id="KW-1185">Reference proteome</keyword>
<comment type="function">
    <text evidence="1 3 5">Component of the CENPA-NAC (nucleosome-associated) complex, a complex that plays a central role in assembly of kinetochore proteins, mitotic progression and chromosome segregation (By similarity). The CENPA-NAC complex recruits the CENPA-CAD (nucleosome distal) complex and may be involved in incorporation of newly synthesized CENPA into centromeres (By similarity). Part of a nucleosome-associated complex that binds specifically to histone H3-containing nucleosomes at the centromere, as opposed to nucleosomes containing CENPA. Component of the heterotetrameric CENP-T-W-S-X complex that binds and supercoils DNA, and plays an important role in kinetochore assembly. CENPW has a fundamental role in kinetochore assembly and function. It is one of the inner kinetochore proteins, with most further proteins binding downstream. Required for normal chromosome organization and normal progress through mitosis.</text>
</comment>
<comment type="subunit">
    <text evidence="2 3 4 5">Heterodimer with CENPT; this dimer coassembles with CENPS-CENPX heterodimers at centromeres to form the tetrameric CENP-T-W-S-X complex, which is a subcomplex of the large constitutive centromere-associated network (CCAN, also known as the interphase centromere complex or ICEN) (PubMed:19070575, PubMed:21464230, PubMed:22304917). Interacts with NPM1 (By similarity).</text>
</comment>
<comment type="interaction">
    <interactant intactId="EBI-2132287">
        <id>P0DJH6</id>
    </interactant>
    <interactant intactId="EBI-2132248">
        <id>F1NPG5</id>
        <label>CENPT</label>
    </interactant>
    <organismsDiffer>false</organismsDiffer>
    <experiments>4</experiments>
</comment>
<comment type="subcellular location">
    <subcellularLocation>
        <location evidence="3">Nucleus</location>
    </subcellularLocation>
    <subcellularLocation>
        <location evidence="3">Chromosome</location>
        <location evidence="3">Centromere</location>
    </subcellularLocation>
    <subcellularLocation>
        <location evidence="3">Chromosome</location>
        <location evidence="3">Centromere</location>
        <location evidence="3">Kinetochore</location>
    </subcellularLocation>
    <text evidence="3">Constitutively localizes to centromeres throughout the cell cycle, and to kinetochores during mitosis (PubMed:19070575). Localizes to the inner kinetochore.</text>
</comment>
<comment type="miscellaneous">
    <text>Association with CENPA-containing complexes may be indirect and due to the proximity of centromeric nucleosomes containing histone H3 with those containing CENPA.</text>
</comment>
<comment type="similarity">
    <text evidence="6">Belongs to the CENP-W/WIP1 family.</text>
</comment>
<dbReference type="EMBL" id="BU413473">
    <property type="status" value="NOT_ANNOTATED_CDS"/>
    <property type="molecule type" value="mRNA"/>
</dbReference>
<dbReference type="RefSeq" id="NP_001264662.1">
    <property type="nucleotide sequence ID" value="NM_001277733.2"/>
</dbReference>
<dbReference type="PDB" id="3B0C">
    <property type="method" value="X-ray"/>
    <property type="resolution" value="2.20 A"/>
    <property type="chains" value="W=2-76"/>
</dbReference>
<dbReference type="PDB" id="3B0D">
    <property type="method" value="X-ray"/>
    <property type="resolution" value="2.20 A"/>
    <property type="chains" value="C/W=2-76"/>
</dbReference>
<dbReference type="PDB" id="3VH5">
    <property type="method" value="X-ray"/>
    <property type="resolution" value="2.40 A"/>
    <property type="chains" value="W=2-76"/>
</dbReference>
<dbReference type="PDB" id="3VH6">
    <property type="method" value="X-ray"/>
    <property type="resolution" value="3.35 A"/>
    <property type="chains" value="W=2-76"/>
</dbReference>
<dbReference type="PDBsum" id="3B0C"/>
<dbReference type="PDBsum" id="3B0D"/>
<dbReference type="PDBsum" id="3VH5"/>
<dbReference type="PDBsum" id="3VH6"/>
<dbReference type="SMR" id="P0DJH6"/>
<dbReference type="BioGRID" id="682498">
    <property type="interactions" value="1"/>
</dbReference>
<dbReference type="FunCoup" id="P0DJH6">
    <property type="interactions" value="186"/>
</dbReference>
<dbReference type="IntAct" id="P0DJH6">
    <property type="interactions" value="3"/>
</dbReference>
<dbReference type="STRING" id="9031.ENSGALP00000042097"/>
<dbReference type="GeneID" id="421716"/>
<dbReference type="KEGG" id="gga:421716"/>
<dbReference type="CTD" id="387103"/>
<dbReference type="VEuPathDB" id="HostDB:geneid_421716"/>
<dbReference type="HOGENOM" id="CLU_178644_1_0_1"/>
<dbReference type="InParanoid" id="P0DJH6"/>
<dbReference type="OMA" id="IIKKDHV"/>
<dbReference type="OrthoDB" id="2543597at2759"/>
<dbReference type="Reactome" id="R-GGA-606279">
    <property type="pathway name" value="Deposition of new CENPA-containing nucleosomes at the centromere"/>
</dbReference>
<dbReference type="EvolutionaryTrace" id="P0DJH6"/>
<dbReference type="PRO" id="PR:P0DJH6"/>
<dbReference type="Proteomes" id="UP000000539">
    <property type="component" value="Chromosome 3"/>
</dbReference>
<dbReference type="Bgee" id="ENSGALG00000027454">
    <property type="expression patterns" value="Expressed in testis and 12 other cell types or tissues"/>
</dbReference>
<dbReference type="GO" id="GO:0000776">
    <property type="term" value="C:kinetochore"/>
    <property type="evidence" value="ECO:0000318"/>
    <property type="project" value="GO_Central"/>
</dbReference>
<dbReference type="GO" id="GO:0005654">
    <property type="term" value="C:nucleoplasm"/>
    <property type="evidence" value="ECO:0000318"/>
    <property type="project" value="GO_Central"/>
</dbReference>
<dbReference type="GO" id="GO:0003677">
    <property type="term" value="F:DNA binding"/>
    <property type="evidence" value="ECO:0007669"/>
    <property type="project" value="UniProtKB-KW"/>
</dbReference>
<dbReference type="GO" id="GO:0046982">
    <property type="term" value="F:protein heterodimerization activity"/>
    <property type="evidence" value="ECO:0007669"/>
    <property type="project" value="InterPro"/>
</dbReference>
<dbReference type="GO" id="GO:0051301">
    <property type="term" value="P:cell division"/>
    <property type="evidence" value="ECO:0007669"/>
    <property type="project" value="UniProtKB-KW"/>
</dbReference>
<dbReference type="GO" id="GO:0007059">
    <property type="term" value="P:chromosome segregation"/>
    <property type="evidence" value="ECO:0000318"/>
    <property type="project" value="GO_Central"/>
</dbReference>
<dbReference type="GO" id="GO:0051382">
    <property type="term" value="P:kinetochore assembly"/>
    <property type="evidence" value="ECO:0000318"/>
    <property type="project" value="GO_Central"/>
</dbReference>
<dbReference type="GO" id="GO:0000278">
    <property type="term" value="P:mitotic cell cycle"/>
    <property type="evidence" value="ECO:0000318"/>
    <property type="project" value="GO_Central"/>
</dbReference>
<dbReference type="CDD" id="cd13732">
    <property type="entry name" value="HFD_CENP-W"/>
    <property type="match status" value="1"/>
</dbReference>
<dbReference type="FunFam" id="1.10.20.10:FF:000053">
    <property type="entry name" value="Centromere protein W"/>
    <property type="match status" value="1"/>
</dbReference>
<dbReference type="Gene3D" id="1.10.20.10">
    <property type="entry name" value="Histone, subunit A"/>
    <property type="match status" value="1"/>
</dbReference>
<dbReference type="InterPro" id="IPR028847">
    <property type="entry name" value="CENP-W"/>
</dbReference>
<dbReference type="InterPro" id="IPR052484">
    <property type="entry name" value="CENP-W/WIP1"/>
</dbReference>
<dbReference type="InterPro" id="IPR009072">
    <property type="entry name" value="Histone-fold"/>
</dbReference>
<dbReference type="PANTHER" id="PTHR34832">
    <property type="entry name" value="CENTROMERE PROTEIN W"/>
    <property type="match status" value="1"/>
</dbReference>
<dbReference type="PANTHER" id="PTHR34832:SF1">
    <property type="entry name" value="CENTROMERE PROTEIN W"/>
    <property type="match status" value="1"/>
</dbReference>
<dbReference type="Pfam" id="PF15510">
    <property type="entry name" value="CENP-W"/>
    <property type="match status" value="1"/>
</dbReference>
<dbReference type="SUPFAM" id="SSF47113">
    <property type="entry name" value="Histone-fold"/>
    <property type="match status" value="1"/>
</dbReference>
<accession>P0DJH6</accession>
<feature type="chain" id="PRO_0000417384" description="Centromere protein W">
    <location>
        <begin position="1"/>
        <end position="76"/>
    </location>
</feature>
<feature type="mutagenesis site" description="Lethal mitotic defects; when associated with A-22 and A-75. Lethal mitotic defects; when associated with A-11; A-12; A-22; A-54 and A-56. Lethal mitotic defects; when associated with A-11; A-12; A-22 and A-75." evidence="3 5">
    <original>R</original>
    <variation>A</variation>
    <location>
        <position position="7"/>
    </location>
</feature>
<feature type="mutagenesis site" description="Lethal mitotic defects; when associated with A-7; A-12; A-22; A-54 and A-56. Lethal mitotic defects; when associated with A-7; A-12; A-22 and A-75." evidence="3 5">
    <original>R</original>
    <variation>A</variation>
    <location>
        <position position="11"/>
    </location>
</feature>
<feature type="mutagenesis site" description="Lethal mitotic defects; when associated with A-7; A-11; A-22; A-54 and A-56. Lethal mitotic defects; when associated with A-7; A-11; A-22 and A-75." evidence="3 5">
    <original>K</original>
    <variation>A</variation>
    <location>
        <position position="12"/>
    </location>
</feature>
<feature type="mutagenesis site" description="Lethal mitotic defects; when associated with A-7 and A-75. Lethal mitotic defects; when associated with A-7; A-11; A-12; A-54 and A-56. Lethal mitotic defects; when associated with A-7; A-11; A-12 and A-75." evidence="3 5">
    <original>R</original>
    <variation>A</variation>
    <location>
        <position position="22"/>
    </location>
</feature>
<feature type="mutagenesis site" description="Lethal mitotic defects; when associated with A-7; A-11; A-12; A-22; and A-56." evidence="5">
    <original>K</original>
    <variation>A</variation>
    <location>
        <position position="54"/>
    </location>
</feature>
<feature type="mutagenesis site" description="Lethal mitotic defects; when associated with A-7; A-11; A-12; A-22 and A-54." evidence="5">
    <original>K</original>
    <variation>A</variation>
    <location>
        <position position="56"/>
    </location>
</feature>
<feature type="mutagenesis site" description="Lethal mitotic defects; when associated with A-7 and A-22. Lethal mitotic defects; when associated with A-7; A-11; A-12 and A-22." evidence="3">
    <original>R</original>
    <variation>A</variation>
    <location>
        <position position="75"/>
    </location>
</feature>
<feature type="helix" evidence="7">
    <location>
        <begin position="7"/>
        <end position="17"/>
    </location>
</feature>
<feature type="helix" evidence="7">
    <location>
        <begin position="27"/>
        <end position="52"/>
    </location>
</feature>
<feature type="strand" evidence="7">
    <location>
        <begin position="56"/>
        <end position="58"/>
    </location>
</feature>
<feature type="helix" evidence="7">
    <location>
        <begin position="60"/>
        <end position="73"/>
    </location>
</feature>
<name>CENPW_CHICK</name>
<evidence type="ECO:0000250" key="1"/>
<evidence type="ECO:0000250" key="2">
    <source>
        <dbReference type="UniProtKB" id="Q5EE01"/>
    </source>
</evidence>
<evidence type="ECO:0000269" key="3">
    <source>
    </source>
</evidence>
<evidence type="ECO:0000269" key="4">
    <source>
    </source>
</evidence>
<evidence type="ECO:0000269" key="5">
    <source>
    </source>
</evidence>
<evidence type="ECO:0000305" key="6"/>
<evidence type="ECO:0007829" key="7">
    <source>
        <dbReference type="PDB" id="3B0D"/>
    </source>
</evidence>
<reference key="1">
    <citation type="journal article" date="2002" name="Curr. Biol.">
        <title>A comprehensive collection of chicken cDNAs.</title>
        <authorList>
            <person name="Boardman P.E."/>
            <person name="Sanz-Ezquerro J."/>
            <person name="Overton I.M."/>
            <person name="Burt D.W."/>
            <person name="Bosch E."/>
            <person name="Fong W.T."/>
            <person name="Tickle C."/>
            <person name="Brown W.R."/>
            <person name="Wilson S.A."/>
            <person name="Hubbard S.J."/>
        </authorList>
    </citation>
    <scope>NUCLEOTIDE SEQUENCE [LARGE SCALE MRNA]</scope>
    <source>
        <strain>White Leghorn Hisex</strain>
    </source>
</reference>
<reference key="2">
    <citation type="journal article" date="2008" name="Cell">
        <title>CCAN makes multiple contacts with centromeric DNA to provide distinct pathways to the outer kinetochore.</title>
        <authorList>
            <person name="Hori T."/>
            <person name="Amano M."/>
            <person name="Suzuki A."/>
            <person name="Backer C.B."/>
            <person name="Welburn J.P."/>
            <person name="Dong Y."/>
            <person name="McEwen B.F."/>
            <person name="Shang W.-H."/>
            <person name="Suzuki E."/>
            <person name="Okawa K."/>
            <person name="Cheeseman I.M."/>
            <person name="Fukagawa T."/>
        </authorList>
    </citation>
    <scope>FUNCTION</scope>
    <scope>INTERACTION WITH CENPT</scope>
    <scope>MUTAGENESIS OF ARG-7; ARG-11; LYS-12; ARG-22 AND ARG-75</scope>
    <scope>SUBCELLULAR LOCATION</scope>
</reference>
<reference key="3">
    <citation type="journal article" date="2011" name="J. Cell Biol.">
        <title>Spindle microtubules generate tension-dependent changes in the distribution of inner kinetochore proteins.</title>
        <authorList>
            <person name="Suzuki A."/>
            <person name="Hori T."/>
            <person name="Nishino T."/>
            <person name="Usukura J."/>
            <person name="Miyagi A."/>
            <person name="Morikawa K."/>
            <person name="Fukagawa T."/>
        </authorList>
    </citation>
    <scope>INTERACTION WITH CENPT</scope>
</reference>
<reference key="4">
    <citation type="journal article" date="2012" name="Cell">
        <title>CENP-T-W-S-X forms a unique centromeric chromatin structure with a histone-like fold.</title>
        <authorList>
            <person name="Nishino T."/>
            <person name="Takeuchi K."/>
            <person name="Gascoigne K.E."/>
            <person name="Suzuki A."/>
            <person name="Hori T."/>
            <person name="Oyama T."/>
            <person name="Morikawa K."/>
            <person name="Cheeseman I.M."/>
            <person name="Fukagawa T."/>
        </authorList>
    </citation>
    <scope>X-RAY CRYSTALLOGRAPHY (2.20 ANGSTROMS)</scope>
    <scope>FUNCTION</scope>
    <scope>INTERACTION WITH CENPS; CENPW AND CEPNX</scope>
    <scope>MUTAGENESIS OF ARG-7; ARG-11; LYS-12; ARG-22; LYS-54 AND LYS-56</scope>
</reference>
<organism>
    <name type="scientific">Gallus gallus</name>
    <name type="common">Chicken</name>
    <dbReference type="NCBI Taxonomy" id="9031"/>
    <lineage>
        <taxon>Eukaryota</taxon>
        <taxon>Metazoa</taxon>
        <taxon>Chordata</taxon>
        <taxon>Craniata</taxon>
        <taxon>Vertebrata</taxon>
        <taxon>Euteleostomi</taxon>
        <taxon>Archelosauria</taxon>
        <taxon>Archosauria</taxon>
        <taxon>Dinosauria</taxon>
        <taxon>Saurischia</taxon>
        <taxon>Theropoda</taxon>
        <taxon>Coelurosauria</taxon>
        <taxon>Aves</taxon>
        <taxon>Neognathae</taxon>
        <taxon>Galloanserae</taxon>
        <taxon>Galliformes</taxon>
        <taxon>Phasianidae</taxon>
        <taxon>Phasianinae</taxon>
        <taxon>Gallus</taxon>
    </lineage>
</organism>